<proteinExistence type="inferred from homology"/>
<gene>
    <name evidence="1" type="primary">thrS</name>
</gene>
<protein>
    <recommendedName>
        <fullName evidence="1">Threonine--tRNA ligase</fullName>
        <ecNumber evidence="1">6.1.1.3</ecNumber>
    </recommendedName>
    <alternativeName>
        <fullName evidence="1">Threonyl-tRNA synthetase</fullName>
        <shortName evidence="1">ThrRS</shortName>
    </alternativeName>
</protein>
<reference key="1">
    <citation type="journal article" date="1996" name="J. Bacteriol.">
        <title>Suppression of a sensor kinase-dependent phenotype in Pseudomonas syringae by ribosomal proteins L35 and L20.</title>
        <authorList>
            <person name="Kitten T."/>
            <person name="Willis D.K."/>
        </authorList>
    </citation>
    <scope>NUCLEOTIDE SEQUENCE [GENOMIC DNA]</scope>
    <source>
        <strain>SUPP27</strain>
    </source>
</reference>
<keyword id="KW-0030">Aminoacyl-tRNA synthetase</keyword>
<keyword id="KW-0067">ATP-binding</keyword>
<keyword id="KW-0963">Cytoplasm</keyword>
<keyword id="KW-0436">Ligase</keyword>
<keyword id="KW-0547">Nucleotide-binding</keyword>
<keyword id="KW-0648">Protein biosynthesis</keyword>
<keyword id="KW-0694">RNA-binding</keyword>
<keyword id="KW-0820">tRNA-binding</keyword>
<name>SYT_PSESY</name>
<evidence type="ECO:0000255" key="1">
    <source>
        <dbReference type="HAMAP-Rule" id="MF_00184"/>
    </source>
</evidence>
<sequence>DIELKLSTRPEKRVGSDELWDRAESALASALDSAGQPYDLQPGEGAFYGPKIEFSLKDCLGRVWQCGTLQLDFNLPIRLSAEYVSEDNSRKNPVMLHRAILGSFERFIGILIEHYEGAFPAWLAPTQAVIMNITDKQADFALEVEKTLAESGFRAKSDLRNEKIGFKIREHTLLKVPYLLVIGDREVEMQTVAVRTREGADLGSMPVAQFAEFLAQAVSRRGRQDTE</sequence>
<feature type="chain" id="PRO_0000101030" description="Threonine--tRNA ligase">
    <location>
        <begin position="1" status="less than"/>
        <end position="227"/>
    </location>
</feature>
<feature type="region of interest" description="Catalytic" evidence="1">
    <location>
        <begin position="1" status="less than"/>
        <end position="120"/>
    </location>
</feature>
<feature type="non-terminal residue">
    <location>
        <position position="1"/>
    </location>
</feature>
<comment type="function">
    <text evidence="1">Catalyzes the attachment of threonine to tRNA(Thr) in a two-step reaction: L-threonine is first activated by ATP to form Thr-AMP and then transferred to the acceptor end of tRNA(Thr). Also edits incorrectly charged L-seryl-tRNA(Thr).</text>
</comment>
<comment type="catalytic activity">
    <reaction evidence="1">
        <text>tRNA(Thr) + L-threonine + ATP = L-threonyl-tRNA(Thr) + AMP + diphosphate + H(+)</text>
        <dbReference type="Rhea" id="RHEA:24624"/>
        <dbReference type="Rhea" id="RHEA-COMP:9670"/>
        <dbReference type="Rhea" id="RHEA-COMP:9704"/>
        <dbReference type="ChEBI" id="CHEBI:15378"/>
        <dbReference type="ChEBI" id="CHEBI:30616"/>
        <dbReference type="ChEBI" id="CHEBI:33019"/>
        <dbReference type="ChEBI" id="CHEBI:57926"/>
        <dbReference type="ChEBI" id="CHEBI:78442"/>
        <dbReference type="ChEBI" id="CHEBI:78534"/>
        <dbReference type="ChEBI" id="CHEBI:456215"/>
        <dbReference type="EC" id="6.1.1.3"/>
    </reaction>
</comment>
<comment type="subunit">
    <text evidence="1">Homodimer.</text>
</comment>
<comment type="subcellular location">
    <subcellularLocation>
        <location evidence="1">Cytoplasm</location>
    </subcellularLocation>
</comment>
<comment type="similarity">
    <text evidence="1">Belongs to the class-II aminoacyl-tRNA synthetase family.</text>
</comment>
<dbReference type="EC" id="6.1.1.3" evidence="1"/>
<dbReference type="EMBL" id="U44118">
    <property type="protein sequence ID" value="AAB05013.1"/>
    <property type="molecule type" value="Genomic_DNA"/>
</dbReference>
<dbReference type="SMR" id="P52833"/>
<dbReference type="GO" id="GO:0005829">
    <property type="term" value="C:cytosol"/>
    <property type="evidence" value="ECO:0007669"/>
    <property type="project" value="TreeGrafter"/>
</dbReference>
<dbReference type="GO" id="GO:0005524">
    <property type="term" value="F:ATP binding"/>
    <property type="evidence" value="ECO:0007669"/>
    <property type="project" value="UniProtKB-KW"/>
</dbReference>
<dbReference type="GO" id="GO:0004829">
    <property type="term" value="F:threonine-tRNA ligase activity"/>
    <property type="evidence" value="ECO:0007669"/>
    <property type="project" value="UniProtKB-EC"/>
</dbReference>
<dbReference type="GO" id="GO:0000049">
    <property type="term" value="F:tRNA binding"/>
    <property type="evidence" value="ECO:0007669"/>
    <property type="project" value="UniProtKB-KW"/>
</dbReference>
<dbReference type="GO" id="GO:0006435">
    <property type="term" value="P:threonyl-tRNA aminoacylation"/>
    <property type="evidence" value="ECO:0007669"/>
    <property type="project" value="InterPro"/>
</dbReference>
<dbReference type="CDD" id="cd00860">
    <property type="entry name" value="ThrRS_anticodon"/>
    <property type="match status" value="1"/>
</dbReference>
<dbReference type="FunFam" id="3.40.50.800:FF:000001">
    <property type="entry name" value="Threonine--tRNA ligase"/>
    <property type="match status" value="1"/>
</dbReference>
<dbReference type="Gene3D" id="3.40.50.800">
    <property type="entry name" value="Anticodon-binding domain"/>
    <property type="match status" value="1"/>
</dbReference>
<dbReference type="Gene3D" id="3.30.930.10">
    <property type="entry name" value="Bira Bifunctional Protein, Domain 2"/>
    <property type="match status" value="1"/>
</dbReference>
<dbReference type="InterPro" id="IPR002314">
    <property type="entry name" value="aa-tRNA-synt_IIb"/>
</dbReference>
<dbReference type="InterPro" id="IPR006195">
    <property type="entry name" value="aa-tRNA-synth_II"/>
</dbReference>
<dbReference type="InterPro" id="IPR045864">
    <property type="entry name" value="aa-tRNA-synth_II/BPL/LPL"/>
</dbReference>
<dbReference type="InterPro" id="IPR004154">
    <property type="entry name" value="Anticodon-bd"/>
</dbReference>
<dbReference type="InterPro" id="IPR036621">
    <property type="entry name" value="Anticodon-bd_dom_sf"/>
</dbReference>
<dbReference type="InterPro" id="IPR002320">
    <property type="entry name" value="Thr-tRNA-ligase_IIa"/>
</dbReference>
<dbReference type="InterPro" id="IPR047246">
    <property type="entry name" value="ThrRS_anticodon"/>
</dbReference>
<dbReference type="PANTHER" id="PTHR11451:SF44">
    <property type="entry name" value="THREONINE--TRNA LIGASE, CHLOROPLASTIC_MITOCHONDRIAL 2"/>
    <property type="match status" value="1"/>
</dbReference>
<dbReference type="PANTHER" id="PTHR11451">
    <property type="entry name" value="THREONINE-TRNA LIGASE"/>
    <property type="match status" value="1"/>
</dbReference>
<dbReference type="Pfam" id="PF03129">
    <property type="entry name" value="HGTP_anticodon"/>
    <property type="match status" value="1"/>
</dbReference>
<dbReference type="Pfam" id="PF00587">
    <property type="entry name" value="tRNA-synt_2b"/>
    <property type="match status" value="1"/>
</dbReference>
<dbReference type="PRINTS" id="PR01047">
    <property type="entry name" value="TRNASYNTHTHR"/>
</dbReference>
<dbReference type="SUPFAM" id="SSF52954">
    <property type="entry name" value="Class II aaRS ABD-related"/>
    <property type="match status" value="1"/>
</dbReference>
<dbReference type="SUPFAM" id="SSF55681">
    <property type="entry name" value="Class II aaRS and biotin synthetases"/>
    <property type="match status" value="1"/>
</dbReference>
<dbReference type="PROSITE" id="PS50862">
    <property type="entry name" value="AA_TRNA_LIGASE_II"/>
    <property type="match status" value="1"/>
</dbReference>
<accession>P52833</accession>
<organism>
    <name type="scientific">Pseudomonas syringae pv. syringae</name>
    <dbReference type="NCBI Taxonomy" id="321"/>
    <lineage>
        <taxon>Bacteria</taxon>
        <taxon>Pseudomonadati</taxon>
        <taxon>Pseudomonadota</taxon>
        <taxon>Gammaproteobacteria</taxon>
        <taxon>Pseudomonadales</taxon>
        <taxon>Pseudomonadaceae</taxon>
        <taxon>Pseudomonas</taxon>
        <taxon>Pseudomonas syringae</taxon>
    </lineage>
</organism>